<dbReference type="EC" id="1.3.1.14"/>
<dbReference type="EMBL" id="CR626927">
    <property type="protein sequence ID" value="CAH08183.1"/>
    <property type="molecule type" value="Genomic_DNA"/>
</dbReference>
<dbReference type="RefSeq" id="WP_005787859.1">
    <property type="nucleotide sequence ID" value="NZ_UFTH01000001.1"/>
</dbReference>
<dbReference type="SMR" id="Q5LCI2"/>
<dbReference type="PaxDb" id="272559-BF9343_2402"/>
<dbReference type="KEGG" id="bfs:BF9343_2402"/>
<dbReference type="eggNOG" id="COG0167">
    <property type="taxonomic scope" value="Bacteria"/>
</dbReference>
<dbReference type="HOGENOM" id="CLU_042042_0_0_10"/>
<dbReference type="UniPathway" id="UPA00070">
    <property type="reaction ID" value="UER00945"/>
</dbReference>
<dbReference type="Proteomes" id="UP000006731">
    <property type="component" value="Chromosome"/>
</dbReference>
<dbReference type="GO" id="GO:0005737">
    <property type="term" value="C:cytoplasm"/>
    <property type="evidence" value="ECO:0007669"/>
    <property type="project" value="UniProtKB-SubCell"/>
</dbReference>
<dbReference type="GO" id="GO:0004589">
    <property type="term" value="F:dihydroorotate dehydrogenase (NAD+) activity"/>
    <property type="evidence" value="ECO:0007669"/>
    <property type="project" value="UniProtKB-EC"/>
</dbReference>
<dbReference type="GO" id="GO:0006207">
    <property type="term" value="P:'de novo' pyrimidine nucleobase biosynthetic process"/>
    <property type="evidence" value="ECO:0007669"/>
    <property type="project" value="InterPro"/>
</dbReference>
<dbReference type="GO" id="GO:0044205">
    <property type="term" value="P:'de novo' UMP biosynthetic process"/>
    <property type="evidence" value="ECO:0007669"/>
    <property type="project" value="UniProtKB-UniRule"/>
</dbReference>
<dbReference type="CDD" id="cd04740">
    <property type="entry name" value="DHOD_1B_like"/>
    <property type="match status" value="1"/>
</dbReference>
<dbReference type="FunFam" id="3.20.20.70:FF:000069">
    <property type="entry name" value="Dihydroorotate dehydrogenase"/>
    <property type="match status" value="1"/>
</dbReference>
<dbReference type="Gene3D" id="3.20.20.70">
    <property type="entry name" value="Aldolase class I"/>
    <property type="match status" value="1"/>
</dbReference>
<dbReference type="HAMAP" id="MF_00224">
    <property type="entry name" value="DHO_dh_type1"/>
    <property type="match status" value="1"/>
</dbReference>
<dbReference type="InterPro" id="IPR013785">
    <property type="entry name" value="Aldolase_TIM"/>
</dbReference>
<dbReference type="InterPro" id="IPR050074">
    <property type="entry name" value="DHO_dehydrogenase"/>
</dbReference>
<dbReference type="InterPro" id="IPR033888">
    <property type="entry name" value="DHOD_1B"/>
</dbReference>
<dbReference type="InterPro" id="IPR024920">
    <property type="entry name" value="Dihydroorotate_DH_1"/>
</dbReference>
<dbReference type="InterPro" id="IPR012135">
    <property type="entry name" value="Dihydroorotate_DH_1_2"/>
</dbReference>
<dbReference type="InterPro" id="IPR005720">
    <property type="entry name" value="Dihydroorotate_DH_cat"/>
</dbReference>
<dbReference type="InterPro" id="IPR001295">
    <property type="entry name" value="Dihydroorotate_DH_CS"/>
</dbReference>
<dbReference type="InterPro" id="IPR049622">
    <property type="entry name" value="Dihydroorotate_DH_I"/>
</dbReference>
<dbReference type="NCBIfam" id="NF005574">
    <property type="entry name" value="PRK07259.1"/>
    <property type="match status" value="1"/>
</dbReference>
<dbReference type="NCBIfam" id="TIGR01037">
    <property type="entry name" value="pyrD_sub1_fam"/>
    <property type="match status" value="1"/>
</dbReference>
<dbReference type="PANTHER" id="PTHR48109:SF1">
    <property type="entry name" value="DIHYDROOROTATE DEHYDROGENASE (FUMARATE)"/>
    <property type="match status" value="1"/>
</dbReference>
<dbReference type="PANTHER" id="PTHR48109">
    <property type="entry name" value="DIHYDROOROTATE DEHYDROGENASE (QUINONE), MITOCHONDRIAL-RELATED"/>
    <property type="match status" value="1"/>
</dbReference>
<dbReference type="Pfam" id="PF01180">
    <property type="entry name" value="DHO_dh"/>
    <property type="match status" value="1"/>
</dbReference>
<dbReference type="PIRSF" id="PIRSF000164">
    <property type="entry name" value="DHO_oxidase"/>
    <property type="match status" value="1"/>
</dbReference>
<dbReference type="SUPFAM" id="SSF51395">
    <property type="entry name" value="FMN-linked oxidoreductases"/>
    <property type="match status" value="1"/>
</dbReference>
<dbReference type="PROSITE" id="PS00911">
    <property type="entry name" value="DHODEHASE_1"/>
    <property type="match status" value="1"/>
</dbReference>
<dbReference type="PROSITE" id="PS00912">
    <property type="entry name" value="DHODEHASE_2"/>
    <property type="match status" value="1"/>
</dbReference>
<evidence type="ECO:0000250" key="1"/>
<evidence type="ECO:0000305" key="2"/>
<name>PYRDB_BACFN</name>
<reference key="1">
    <citation type="journal article" date="2005" name="Science">
        <title>Extensive DNA inversions in the B. fragilis genome control variable gene expression.</title>
        <authorList>
            <person name="Cerdeno-Tarraga A.-M."/>
            <person name="Patrick S."/>
            <person name="Crossman L.C."/>
            <person name="Blakely G."/>
            <person name="Abratt V."/>
            <person name="Lennard N."/>
            <person name="Poxton I."/>
            <person name="Duerden B."/>
            <person name="Harris B."/>
            <person name="Quail M.A."/>
            <person name="Barron A."/>
            <person name="Clark L."/>
            <person name="Corton C."/>
            <person name="Doggett J."/>
            <person name="Holden M.T.G."/>
            <person name="Larke N."/>
            <person name="Line A."/>
            <person name="Lord A."/>
            <person name="Norbertczak H."/>
            <person name="Ormond D."/>
            <person name="Price C."/>
            <person name="Rabbinowitsch E."/>
            <person name="Woodward J."/>
            <person name="Barrell B.G."/>
            <person name="Parkhill J."/>
        </authorList>
    </citation>
    <scope>NUCLEOTIDE SEQUENCE [LARGE SCALE GENOMIC DNA]</scope>
    <source>
        <strain>ATCC 25285 / DSM 2151 / CCUG 4856 / JCM 11019 / LMG 10263 / NCTC 9343 / Onslow / VPI 2553 / EN-2</strain>
    </source>
</reference>
<protein>
    <recommendedName>
        <fullName>Dihydroorotate dehydrogenase B (NAD(+)), catalytic subunit</fullName>
        <shortName>DHOD B</shortName>
        <shortName>DHODase B</shortName>
        <shortName>DHOdehase B</shortName>
        <ecNumber>1.3.1.14</ecNumber>
    </recommendedName>
    <alternativeName>
        <fullName>Dihydroorotate oxidase B</fullName>
    </alternativeName>
    <alternativeName>
        <fullName>Orotate reductase (NADH)</fullName>
    </alternativeName>
</protein>
<gene>
    <name type="primary">pyrD</name>
    <name type="ordered locus">BF2483</name>
</gene>
<proteinExistence type="inferred from homology"/>
<keyword id="KW-0963">Cytoplasm</keyword>
<keyword id="KW-0285">Flavoprotein</keyword>
<keyword id="KW-0288">FMN</keyword>
<keyword id="KW-0520">NAD</keyword>
<keyword id="KW-0560">Oxidoreductase</keyword>
<keyword id="KW-0665">Pyrimidine biosynthesis</keyword>
<sequence length="303" mass="32332">MADLSVNIGKLQMKNPVMTASGTFGYGEEFADFIDITRIGGIIVKGTTLHKREGNPYPRMAETPSGMLNAVGLQNKGVEYFSNHIYPRIKDIQTHMIVNVSGSAIEDYVKTAEIINELDKIPAIELNISCPNVKQGGMAFGVTTKGVSEVVQAVRSAYKKTLIVKLSPNVTDIAEMARAAEANGADSVSLINTLLGMAIDAERKRPILSTVTGGMSGAAVKPIALRMVWQVAKAVNIPVIGLGGIMNWKDAVEFMLAGASAIQIGTANFIDPAITIKVIDGINDYLERHGCKSVSEIIGALEV</sequence>
<accession>Q5LCI2</accession>
<organism>
    <name type="scientific">Bacteroides fragilis (strain ATCC 25285 / DSM 2151 / CCUG 4856 / JCM 11019 / LMG 10263 / NCTC 9343 / Onslow / VPI 2553 / EN-2)</name>
    <dbReference type="NCBI Taxonomy" id="272559"/>
    <lineage>
        <taxon>Bacteria</taxon>
        <taxon>Pseudomonadati</taxon>
        <taxon>Bacteroidota</taxon>
        <taxon>Bacteroidia</taxon>
        <taxon>Bacteroidales</taxon>
        <taxon>Bacteroidaceae</taxon>
        <taxon>Bacteroides</taxon>
    </lineage>
</organism>
<comment type="function">
    <text evidence="1">Catalyzes the conversion of dihydroorotate to orotate with NAD(+) as electron acceptor.</text>
</comment>
<comment type="catalytic activity">
    <reaction>
        <text>(S)-dihydroorotate + NAD(+) = orotate + NADH + H(+)</text>
        <dbReference type="Rhea" id="RHEA:13513"/>
        <dbReference type="ChEBI" id="CHEBI:15378"/>
        <dbReference type="ChEBI" id="CHEBI:30839"/>
        <dbReference type="ChEBI" id="CHEBI:30864"/>
        <dbReference type="ChEBI" id="CHEBI:57540"/>
        <dbReference type="ChEBI" id="CHEBI:57945"/>
        <dbReference type="EC" id="1.3.1.14"/>
    </reaction>
</comment>
<comment type="cofactor">
    <cofactor evidence="1">
        <name>FMN</name>
        <dbReference type="ChEBI" id="CHEBI:58210"/>
    </cofactor>
    <text evidence="1">Binds 1 FMN per subunit.</text>
</comment>
<comment type="pathway">
    <text>Pyrimidine metabolism; UMP biosynthesis via de novo pathway; orotate from (S)-dihydroorotate (NAD(+) route): step 1/1.</text>
</comment>
<comment type="subunit">
    <text evidence="1">Heterotetramer of 2 PyrK and 2 PyrD type B subunits.</text>
</comment>
<comment type="subcellular location">
    <subcellularLocation>
        <location evidence="1">Cytoplasm</location>
    </subcellularLocation>
</comment>
<comment type="similarity">
    <text evidence="2">Belongs to the dihydroorotate dehydrogenase family. Type 1 subfamily.</text>
</comment>
<feature type="chain" id="PRO_1000024127" description="Dihydroorotate dehydrogenase B (NAD(+)), catalytic subunit">
    <location>
        <begin position="1"/>
        <end position="303"/>
    </location>
</feature>
<feature type="active site" description="Nucleophile">
    <location>
        <position position="130"/>
    </location>
</feature>
<feature type="binding site" evidence="1">
    <location>
        <position position="21"/>
    </location>
    <ligand>
        <name>FMN</name>
        <dbReference type="ChEBI" id="CHEBI:58210"/>
    </ligand>
</feature>
<feature type="binding site" evidence="1">
    <location>
        <begin position="45"/>
        <end position="46"/>
    </location>
    <ligand>
        <name>FMN</name>
        <dbReference type="ChEBI" id="CHEBI:58210"/>
    </ligand>
</feature>
<feature type="binding site" evidence="1">
    <location>
        <position position="45"/>
    </location>
    <ligand>
        <name>substrate</name>
    </ligand>
</feature>
<feature type="binding site" evidence="1">
    <location>
        <begin position="69"/>
        <end position="73"/>
    </location>
    <ligand>
        <name>substrate</name>
    </ligand>
</feature>
<feature type="binding site" evidence="1">
    <location>
        <position position="99"/>
    </location>
    <ligand>
        <name>FMN</name>
        <dbReference type="ChEBI" id="CHEBI:58210"/>
    </ligand>
</feature>
<feature type="binding site" evidence="1">
    <location>
        <position position="127"/>
    </location>
    <ligand>
        <name>FMN</name>
        <dbReference type="ChEBI" id="CHEBI:58210"/>
    </ligand>
</feature>
<feature type="binding site" evidence="1">
    <location>
        <position position="127"/>
    </location>
    <ligand>
        <name>substrate</name>
    </ligand>
</feature>
<feature type="binding site" evidence="1">
    <location>
        <position position="165"/>
    </location>
    <ligand>
        <name>FMN</name>
        <dbReference type="ChEBI" id="CHEBI:58210"/>
    </ligand>
</feature>
<feature type="binding site" evidence="1">
    <location>
        <position position="191"/>
    </location>
    <ligand>
        <name>FMN</name>
        <dbReference type="ChEBI" id="CHEBI:58210"/>
    </ligand>
</feature>
<feature type="binding site" evidence="1">
    <location>
        <begin position="192"/>
        <end position="193"/>
    </location>
    <ligand>
        <name>substrate</name>
    </ligand>
</feature>
<feature type="binding site" evidence="1">
    <location>
        <position position="217"/>
    </location>
    <ligand>
        <name>FMN</name>
        <dbReference type="ChEBI" id="CHEBI:58210"/>
    </ligand>
</feature>
<feature type="binding site" evidence="1">
    <location>
        <begin position="243"/>
        <end position="244"/>
    </location>
    <ligand>
        <name>FMN</name>
        <dbReference type="ChEBI" id="CHEBI:58210"/>
    </ligand>
</feature>
<feature type="binding site" evidence="1">
    <location>
        <begin position="265"/>
        <end position="266"/>
    </location>
    <ligand>
        <name>FMN</name>
        <dbReference type="ChEBI" id="CHEBI:58210"/>
    </ligand>
</feature>